<gene>
    <name evidence="1" type="primary">rbfA</name>
    <name type="ordered locus">Pfl01_0780</name>
</gene>
<reference key="1">
    <citation type="journal article" date="2009" name="Genome Biol.">
        <title>Genomic and genetic analyses of diversity and plant interactions of Pseudomonas fluorescens.</title>
        <authorList>
            <person name="Silby M.W."/>
            <person name="Cerdeno-Tarraga A.M."/>
            <person name="Vernikos G.S."/>
            <person name="Giddens S.R."/>
            <person name="Jackson R.W."/>
            <person name="Preston G.M."/>
            <person name="Zhang X.-X."/>
            <person name="Moon C.D."/>
            <person name="Gehrig S.M."/>
            <person name="Godfrey S.A.C."/>
            <person name="Knight C.G."/>
            <person name="Malone J.G."/>
            <person name="Robinson Z."/>
            <person name="Spiers A.J."/>
            <person name="Harris S."/>
            <person name="Challis G.L."/>
            <person name="Yaxley A.M."/>
            <person name="Harris D."/>
            <person name="Seeger K."/>
            <person name="Murphy L."/>
            <person name="Rutter S."/>
            <person name="Squares R."/>
            <person name="Quail M.A."/>
            <person name="Saunders E."/>
            <person name="Mavromatis K."/>
            <person name="Brettin T.S."/>
            <person name="Bentley S.D."/>
            <person name="Hothersall J."/>
            <person name="Stephens E."/>
            <person name="Thomas C.M."/>
            <person name="Parkhill J."/>
            <person name="Levy S.B."/>
            <person name="Rainey P.B."/>
            <person name="Thomson N.R."/>
        </authorList>
    </citation>
    <scope>NUCLEOTIDE SEQUENCE [LARGE SCALE GENOMIC DNA]</scope>
    <source>
        <strain>Pf0-1</strain>
    </source>
</reference>
<keyword id="KW-0963">Cytoplasm</keyword>
<keyword id="KW-0690">Ribosome biogenesis</keyword>
<organism>
    <name type="scientific">Pseudomonas fluorescens (strain Pf0-1)</name>
    <dbReference type="NCBI Taxonomy" id="205922"/>
    <lineage>
        <taxon>Bacteria</taxon>
        <taxon>Pseudomonadati</taxon>
        <taxon>Pseudomonadota</taxon>
        <taxon>Gammaproteobacteria</taxon>
        <taxon>Pseudomonadales</taxon>
        <taxon>Pseudomonadaceae</taxon>
        <taxon>Pseudomonas</taxon>
    </lineage>
</organism>
<accession>Q3KI83</accession>
<protein>
    <recommendedName>
        <fullName evidence="1">Ribosome-binding factor A</fullName>
    </recommendedName>
</protein>
<proteinExistence type="inferred from homology"/>
<dbReference type="EMBL" id="CP000094">
    <property type="protein sequence ID" value="ABA72523.1"/>
    <property type="molecule type" value="Genomic_DNA"/>
</dbReference>
<dbReference type="RefSeq" id="WP_007953741.1">
    <property type="nucleotide sequence ID" value="NC_007492.2"/>
</dbReference>
<dbReference type="SMR" id="Q3KI83"/>
<dbReference type="KEGG" id="pfo:Pfl01_0780"/>
<dbReference type="eggNOG" id="COG0858">
    <property type="taxonomic scope" value="Bacteria"/>
</dbReference>
<dbReference type="HOGENOM" id="CLU_089475_5_0_6"/>
<dbReference type="Proteomes" id="UP000002704">
    <property type="component" value="Chromosome"/>
</dbReference>
<dbReference type="GO" id="GO:0005829">
    <property type="term" value="C:cytosol"/>
    <property type="evidence" value="ECO:0007669"/>
    <property type="project" value="TreeGrafter"/>
</dbReference>
<dbReference type="GO" id="GO:0043024">
    <property type="term" value="F:ribosomal small subunit binding"/>
    <property type="evidence" value="ECO:0007669"/>
    <property type="project" value="TreeGrafter"/>
</dbReference>
<dbReference type="GO" id="GO:0030490">
    <property type="term" value="P:maturation of SSU-rRNA"/>
    <property type="evidence" value="ECO:0007669"/>
    <property type="project" value="UniProtKB-UniRule"/>
</dbReference>
<dbReference type="Gene3D" id="3.30.300.20">
    <property type="match status" value="1"/>
</dbReference>
<dbReference type="HAMAP" id="MF_00003">
    <property type="entry name" value="RbfA"/>
    <property type="match status" value="1"/>
</dbReference>
<dbReference type="InterPro" id="IPR015946">
    <property type="entry name" value="KH_dom-like_a/b"/>
</dbReference>
<dbReference type="InterPro" id="IPR000238">
    <property type="entry name" value="RbfA"/>
</dbReference>
<dbReference type="InterPro" id="IPR023799">
    <property type="entry name" value="RbfA_dom_sf"/>
</dbReference>
<dbReference type="InterPro" id="IPR020053">
    <property type="entry name" value="Ribosome-bd_factorA_CS"/>
</dbReference>
<dbReference type="NCBIfam" id="TIGR00082">
    <property type="entry name" value="rbfA"/>
    <property type="match status" value="1"/>
</dbReference>
<dbReference type="PANTHER" id="PTHR33515">
    <property type="entry name" value="RIBOSOME-BINDING FACTOR A, CHLOROPLASTIC-RELATED"/>
    <property type="match status" value="1"/>
</dbReference>
<dbReference type="PANTHER" id="PTHR33515:SF1">
    <property type="entry name" value="RIBOSOME-BINDING FACTOR A, CHLOROPLASTIC-RELATED"/>
    <property type="match status" value="1"/>
</dbReference>
<dbReference type="Pfam" id="PF02033">
    <property type="entry name" value="RBFA"/>
    <property type="match status" value="1"/>
</dbReference>
<dbReference type="SUPFAM" id="SSF89919">
    <property type="entry name" value="Ribosome-binding factor A, RbfA"/>
    <property type="match status" value="1"/>
</dbReference>
<dbReference type="PROSITE" id="PS01319">
    <property type="entry name" value="RBFA"/>
    <property type="match status" value="1"/>
</dbReference>
<feature type="chain" id="PRO_1000000179" description="Ribosome-binding factor A">
    <location>
        <begin position="1"/>
        <end position="133"/>
    </location>
</feature>
<evidence type="ECO:0000255" key="1">
    <source>
        <dbReference type="HAMAP-Rule" id="MF_00003"/>
    </source>
</evidence>
<comment type="function">
    <text evidence="1">One of several proteins that assist in the late maturation steps of the functional core of the 30S ribosomal subunit. Associates with free 30S ribosomal subunits (but not with 30S subunits that are part of 70S ribosomes or polysomes). Required for efficient processing of 16S rRNA. May interact with the 5'-terminal helix region of 16S rRNA.</text>
</comment>
<comment type="subunit">
    <text evidence="1">Monomer. Binds 30S ribosomal subunits, but not 50S ribosomal subunits or 70S ribosomes.</text>
</comment>
<comment type="subcellular location">
    <subcellularLocation>
        <location evidence="1">Cytoplasm</location>
    </subcellularLocation>
</comment>
<comment type="similarity">
    <text evidence="1">Belongs to the RbfA family.</text>
</comment>
<name>RBFA_PSEPF</name>
<sequence>MAKEYSRTQRIGDQMQRELAQLIRREVKDPRVGLVTITAVEVSRDVGHAKIFITVMGQDNAEDIAQSIKVLNAAAGFLRMQLAREMKLRSVPQLHFHYDESVVRGAHLSALIERAVAEDNQHVAAAEPEDTKE</sequence>